<name>SX19A_DANRE</name>
<gene>
    <name type="primary">sox19a</name>
    <name type="synonym">sox19</name>
    <name type="ORF">si:ch211-137i24.8</name>
</gene>
<proteinExistence type="evidence at protein level"/>
<protein>
    <recommendedName>
        <fullName>Transcription factor Sox-19a</fullName>
    </recommendedName>
</protein>
<reference key="1">
    <citation type="journal article" date="1995" name="Gene">
        <title>The zebrafish Zf-Sox 19 protein: a novel member of the Sox family which reveals highly conserved motifs outside of the DNA-binding domain.</title>
        <authorList>
            <person name="Vriz S."/>
            <person name="Lovell-Badge R."/>
        </authorList>
    </citation>
    <scope>NUCLEOTIDE SEQUENCE [MRNA]</scope>
    <source>
        <strain>WT</strain>
        <tissue>Embryo</tissue>
    </source>
</reference>
<reference key="2">
    <citation type="journal article" date="1996" name="Brain Res. Mol. Brain Res.">
        <title>Zygotic expression of the zebrafish Sox-19, an HMG box-containing gene, suggests an involvement in central nervous system development.</title>
        <authorList>
            <person name="Vriz S."/>
            <person name="Joly C."/>
            <person name="Boulekbache H."/>
            <person name="Condamine H."/>
        </authorList>
    </citation>
    <scope>NUCLEOTIDE SEQUENCE [MRNA]</scope>
    <scope>DEVELOPMENTAL STAGE</scope>
    <source>
        <strain>WT</strain>
        <tissue>Embryo</tissue>
    </source>
</reference>
<reference key="3">
    <citation type="journal article" date="2013" name="Nature">
        <title>The zebrafish reference genome sequence and its relationship to the human genome.</title>
        <authorList>
            <person name="Howe K."/>
            <person name="Clark M.D."/>
            <person name="Torroja C.F."/>
            <person name="Torrance J."/>
            <person name="Berthelot C."/>
            <person name="Muffato M."/>
            <person name="Collins J.E."/>
            <person name="Humphray S."/>
            <person name="McLaren K."/>
            <person name="Matthews L."/>
            <person name="McLaren S."/>
            <person name="Sealy I."/>
            <person name="Caccamo M."/>
            <person name="Churcher C."/>
            <person name="Scott C."/>
            <person name="Barrett J.C."/>
            <person name="Koch R."/>
            <person name="Rauch G.J."/>
            <person name="White S."/>
            <person name="Chow W."/>
            <person name="Kilian B."/>
            <person name="Quintais L.T."/>
            <person name="Guerra-Assuncao J.A."/>
            <person name="Zhou Y."/>
            <person name="Gu Y."/>
            <person name="Yen J."/>
            <person name="Vogel J.H."/>
            <person name="Eyre T."/>
            <person name="Redmond S."/>
            <person name="Banerjee R."/>
            <person name="Chi J."/>
            <person name="Fu B."/>
            <person name="Langley E."/>
            <person name="Maguire S.F."/>
            <person name="Laird G.K."/>
            <person name="Lloyd D."/>
            <person name="Kenyon E."/>
            <person name="Donaldson S."/>
            <person name="Sehra H."/>
            <person name="Almeida-King J."/>
            <person name="Loveland J."/>
            <person name="Trevanion S."/>
            <person name="Jones M."/>
            <person name="Quail M."/>
            <person name="Willey D."/>
            <person name="Hunt A."/>
            <person name="Burton J."/>
            <person name="Sims S."/>
            <person name="McLay K."/>
            <person name="Plumb B."/>
            <person name="Davis J."/>
            <person name="Clee C."/>
            <person name="Oliver K."/>
            <person name="Clark R."/>
            <person name="Riddle C."/>
            <person name="Elliot D."/>
            <person name="Threadgold G."/>
            <person name="Harden G."/>
            <person name="Ware D."/>
            <person name="Begum S."/>
            <person name="Mortimore B."/>
            <person name="Kerry G."/>
            <person name="Heath P."/>
            <person name="Phillimore B."/>
            <person name="Tracey A."/>
            <person name="Corby N."/>
            <person name="Dunn M."/>
            <person name="Johnson C."/>
            <person name="Wood J."/>
            <person name="Clark S."/>
            <person name="Pelan S."/>
            <person name="Griffiths G."/>
            <person name="Smith M."/>
            <person name="Glithero R."/>
            <person name="Howden P."/>
            <person name="Barker N."/>
            <person name="Lloyd C."/>
            <person name="Stevens C."/>
            <person name="Harley J."/>
            <person name="Holt K."/>
            <person name="Panagiotidis G."/>
            <person name="Lovell J."/>
            <person name="Beasley H."/>
            <person name="Henderson C."/>
            <person name="Gordon D."/>
            <person name="Auger K."/>
            <person name="Wright D."/>
            <person name="Collins J."/>
            <person name="Raisen C."/>
            <person name="Dyer L."/>
            <person name="Leung K."/>
            <person name="Robertson L."/>
            <person name="Ambridge K."/>
            <person name="Leongamornlert D."/>
            <person name="McGuire S."/>
            <person name="Gilderthorp R."/>
            <person name="Griffiths C."/>
            <person name="Manthravadi D."/>
            <person name="Nichol S."/>
            <person name="Barker G."/>
            <person name="Whitehead S."/>
            <person name="Kay M."/>
            <person name="Brown J."/>
            <person name="Murnane C."/>
            <person name="Gray E."/>
            <person name="Humphries M."/>
            <person name="Sycamore N."/>
            <person name="Barker D."/>
            <person name="Saunders D."/>
            <person name="Wallis J."/>
            <person name="Babbage A."/>
            <person name="Hammond S."/>
            <person name="Mashreghi-Mohammadi M."/>
            <person name="Barr L."/>
            <person name="Martin S."/>
            <person name="Wray P."/>
            <person name="Ellington A."/>
            <person name="Matthews N."/>
            <person name="Ellwood M."/>
            <person name="Woodmansey R."/>
            <person name="Clark G."/>
            <person name="Cooper J."/>
            <person name="Tromans A."/>
            <person name="Grafham D."/>
            <person name="Skuce C."/>
            <person name="Pandian R."/>
            <person name="Andrews R."/>
            <person name="Harrison E."/>
            <person name="Kimberley A."/>
            <person name="Garnett J."/>
            <person name="Fosker N."/>
            <person name="Hall R."/>
            <person name="Garner P."/>
            <person name="Kelly D."/>
            <person name="Bird C."/>
            <person name="Palmer S."/>
            <person name="Gehring I."/>
            <person name="Berger A."/>
            <person name="Dooley C.M."/>
            <person name="Ersan-Urun Z."/>
            <person name="Eser C."/>
            <person name="Geiger H."/>
            <person name="Geisler M."/>
            <person name="Karotki L."/>
            <person name="Kirn A."/>
            <person name="Konantz J."/>
            <person name="Konantz M."/>
            <person name="Oberlander M."/>
            <person name="Rudolph-Geiger S."/>
            <person name="Teucke M."/>
            <person name="Lanz C."/>
            <person name="Raddatz G."/>
            <person name="Osoegawa K."/>
            <person name="Zhu B."/>
            <person name="Rapp A."/>
            <person name="Widaa S."/>
            <person name="Langford C."/>
            <person name="Yang F."/>
            <person name="Schuster S.C."/>
            <person name="Carter N.P."/>
            <person name="Harrow J."/>
            <person name="Ning Z."/>
            <person name="Herrero J."/>
            <person name="Searle S.M."/>
            <person name="Enright A."/>
            <person name="Geisler R."/>
            <person name="Plasterk R.H."/>
            <person name="Lee C."/>
            <person name="Westerfield M."/>
            <person name="de Jong P.J."/>
            <person name="Zon L.I."/>
            <person name="Postlethwait J.H."/>
            <person name="Nusslein-Volhard C."/>
            <person name="Hubbard T.J."/>
            <person name="Roest Crollius H."/>
            <person name="Rogers J."/>
            <person name="Stemple D.L."/>
        </authorList>
    </citation>
    <scope>NUCLEOTIDE SEQUENCE [LARGE SCALE GENOMIC DNA]</scope>
    <source>
        <strain>Tuebingen</strain>
    </source>
</reference>
<reference key="4">
    <citation type="submission" date="2004-07" db="EMBL/GenBank/DDBJ databases">
        <authorList>
            <consortium name="NIH - Zebrafish Gene Collection (ZGC) project"/>
        </authorList>
    </citation>
    <scope>NUCLEOTIDE SEQUENCE [LARGE SCALE MRNA]</scope>
    <source>
        <tissue>Embryo</tissue>
    </source>
</reference>
<reference key="5">
    <citation type="journal article" date="2006" name="Dev. Dyn.">
        <title>Comparative genomic and expression analysis of group B1 sox genes in zebrafish indicates their diversification during vertebrate evolution.</title>
        <authorList>
            <person name="Okuda Y."/>
            <person name="Yoda H."/>
            <person name="Uchikawa M."/>
            <person name="Furutani-Seiki M."/>
            <person name="Takeda H."/>
            <person name="Kondoh H."/>
            <person name="Kamachi Y."/>
        </authorList>
    </citation>
    <scope>FUNCTION</scope>
    <scope>DEVELOPMENTAL STAGE</scope>
</reference>
<reference key="6">
    <citation type="journal article" date="2008" name="J. Proteome Res.">
        <title>Online automated in vivo zebrafish phosphoproteomics: from large-scale analysis down to a single embryo.</title>
        <authorList>
            <person name="Lemeer S."/>
            <person name="Pinkse M.W.H."/>
            <person name="Mohammed S."/>
            <person name="van Breukelen B."/>
            <person name="den Hertog J."/>
            <person name="Slijper M."/>
            <person name="Heck A.J.R."/>
        </authorList>
    </citation>
    <scope>PHOSPHORYLATION [LARGE SCALE ANALYSIS] AT SER-160</scope>
    <scope>IDENTIFICATION BY MASS SPECTROMETRY</scope>
    <source>
        <tissue>Embryo</tissue>
    </source>
</reference>
<organism>
    <name type="scientific">Danio rerio</name>
    <name type="common">Zebrafish</name>
    <name type="synonym">Brachydanio rerio</name>
    <dbReference type="NCBI Taxonomy" id="7955"/>
    <lineage>
        <taxon>Eukaryota</taxon>
        <taxon>Metazoa</taxon>
        <taxon>Chordata</taxon>
        <taxon>Craniata</taxon>
        <taxon>Vertebrata</taxon>
        <taxon>Euteleostomi</taxon>
        <taxon>Actinopterygii</taxon>
        <taxon>Neopterygii</taxon>
        <taxon>Teleostei</taxon>
        <taxon>Ostariophysi</taxon>
        <taxon>Cypriniformes</taxon>
        <taxon>Danionidae</taxon>
        <taxon>Danioninae</taxon>
        <taxon>Danio</taxon>
    </lineage>
</organism>
<keyword id="KW-0010">Activator</keyword>
<keyword id="KW-0217">Developmental protein</keyword>
<keyword id="KW-0221">Differentiation</keyword>
<keyword id="KW-0238">DNA-binding</keyword>
<keyword id="KW-0524">Neurogenesis</keyword>
<keyword id="KW-0539">Nucleus</keyword>
<keyword id="KW-0597">Phosphoprotein</keyword>
<keyword id="KW-1185">Reference proteome</keyword>
<keyword id="KW-0804">Transcription</keyword>
<keyword id="KW-0805">Transcription regulation</keyword>
<accession>P47792</accession>
<accession>A2BEN6</accession>
<accession>Q6DC63</accession>
<evidence type="ECO:0000255" key="1">
    <source>
        <dbReference type="PROSITE-ProRule" id="PRU00267"/>
    </source>
</evidence>
<evidence type="ECO:0000256" key="2">
    <source>
        <dbReference type="SAM" id="MobiDB-lite"/>
    </source>
</evidence>
<evidence type="ECO:0000269" key="3">
    <source>
    </source>
</evidence>
<evidence type="ECO:0000269" key="4">
    <source>
    </source>
</evidence>
<evidence type="ECO:0000269" key="5">
    <source>
    </source>
</evidence>
<evidence type="ECO:0000305" key="6"/>
<dbReference type="EMBL" id="X79821">
    <property type="protein sequence ID" value="CAA56221.1"/>
    <property type="molecule type" value="mRNA"/>
</dbReference>
<dbReference type="EMBL" id="AB242331">
    <property type="protein sequence ID" value="BAE48585.1"/>
    <property type="molecule type" value="mRNA"/>
</dbReference>
<dbReference type="EMBL" id="BX119902">
    <property type="protein sequence ID" value="CAM13211.1"/>
    <property type="molecule type" value="Genomic_DNA"/>
</dbReference>
<dbReference type="EMBL" id="BC078221">
    <property type="protein sequence ID" value="AAH78221.1"/>
    <property type="molecule type" value="mRNA"/>
</dbReference>
<dbReference type="PIR" id="I50519">
    <property type="entry name" value="I50519"/>
</dbReference>
<dbReference type="RefSeq" id="NP_570983.2">
    <property type="nucleotide sequence ID" value="NM_130908.2"/>
</dbReference>
<dbReference type="SMR" id="P47792"/>
<dbReference type="FunCoup" id="P47792">
    <property type="interactions" value="5"/>
</dbReference>
<dbReference type="STRING" id="7955.ENSDARP00000100683"/>
<dbReference type="iPTMnet" id="P47792"/>
<dbReference type="Ensembl" id="ENSDART00000114113">
    <property type="protein sequence ID" value="ENSDARP00000100683"/>
    <property type="gene ID" value="ENSDARG00000010770"/>
</dbReference>
<dbReference type="Ensembl" id="ENSDART00000184159">
    <property type="protein sequence ID" value="ENSDARP00000151033"/>
    <property type="gene ID" value="ENSDARG00000110497"/>
</dbReference>
<dbReference type="GeneID" id="30038"/>
<dbReference type="KEGG" id="dre:30038"/>
<dbReference type="AGR" id="ZFIN:ZDB-GENE-980526-102"/>
<dbReference type="CTD" id="30038"/>
<dbReference type="ZFIN" id="ZDB-GENE-980526-102">
    <property type="gene designation" value="sox19a"/>
</dbReference>
<dbReference type="HOGENOM" id="CLU_021123_0_0_1"/>
<dbReference type="InParanoid" id="P47792"/>
<dbReference type="OMA" id="NTRAYED"/>
<dbReference type="OrthoDB" id="6247875at2759"/>
<dbReference type="PhylomeDB" id="P47792"/>
<dbReference type="TreeFam" id="TF351735"/>
<dbReference type="Reactome" id="R-DRE-3769402">
    <property type="pathway name" value="Deactivation of the beta-catenin transactivating complex"/>
</dbReference>
<dbReference type="PRO" id="PR:P47792"/>
<dbReference type="Proteomes" id="UP000000437">
    <property type="component" value="Alternate scaffold 5"/>
</dbReference>
<dbReference type="Proteomes" id="UP000000437">
    <property type="component" value="Chromosome 5"/>
</dbReference>
<dbReference type="Bgee" id="ENSDARG00000010770">
    <property type="expression patterns" value="Expressed in gastrula and 15 other cell types or tissues"/>
</dbReference>
<dbReference type="GO" id="GO:0005634">
    <property type="term" value="C:nucleus"/>
    <property type="evidence" value="ECO:0000318"/>
    <property type="project" value="GO_Central"/>
</dbReference>
<dbReference type="GO" id="GO:0005667">
    <property type="term" value="C:transcription regulator complex"/>
    <property type="evidence" value="ECO:0000305"/>
    <property type="project" value="ZFIN"/>
</dbReference>
<dbReference type="GO" id="GO:0001228">
    <property type="term" value="F:DNA-binding transcription activator activity, RNA polymerase II-specific"/>
    <property type="evidence" value="ECO:0000318"/>
    <property type="project" value="GO_Central"/>
</dbReference>
<dbReference type="GO" id="GO:0000978">
    <property type="term" value="F:RNA polymerase II cis-regulatory region sequence-specific DNA binding"/>
    <property type="evidence" value="ECO:0000318"/>
    <property type="project" value="GO_Central"/>
</dbReference>
<dbReference type="GO" id="GO:0007420">
    <property type="term" value="P:brain development"/>
    <property type="evidence" value="ECO:0000318"/>
    <property type="project" value="GO_Central"/>
</dbReference>
<dbReference type="GO" id="GO:0000122">
    <property type="term" value="P:negative regulation of transcription by RNA polymerase II"/>
    <property type="evidence" value="ECO:0000318"/>
    <property type="project" value="GO_Central"/>
</dbReference>
<dbReference type="GO" id="GO:0030182">
    <property type="term" value="P:neuron differentiation"/>
    <property type="evidence" value="ECO:0000318"/>
    <property type="project" value="GO_Central"/>
</dbReference>
<dbReference type="GO" id="GO:0045944">
    <property type="term" value="P:positive regulation of transcription by RNA polymerase II"/>
    <property type="evidence" value="ECO:0000318"/>
    <property type="project" value="GO_Central"/>
</dbReference>
<dbReference type="CDD" id="cd01388">
    <property type="entry name" value="HMG-box_SoxB"/>
    <property type="match status" value="1"/>
</dbReference>
<dbReference type="FunFam" id="1.10.30.10:FF:000002">
    <property type="entry name" value="transcription factor Sox-2"/>
    <property type="match status" value="1"/>
</dbReference>
<dbReference type="Gene3D" id="1.10.30.10">
    <property type="entry name" value="High mobility group box domain"/>
    <property type="match status" value="1"/>
</dbReference>
<dbReference type="InterPro" id="IPR009071">
    <property type="entry name" value="HMG_box_dom"/>
</dbReference>
<dbReference type="InterPro" id="IPR036910">
    <property type="entry name" value="HMG_box_dom_sf"/>
</dbReference>
<dbReference type="InterPro" id="IPR022097">
    <property type="entry name" value="SOX_fam"/>
</dbReference>
<dbReference type="InterPro" id="IPR050140">
    <property type="entry name" value="SRY-related_HMG-box_TF-like"/>
</dbReference>
<dbReference type="PANTHER" id="PTHR10270">
    <property type="entry name" value="SOX TRANSCRIPTION FACTOR"/>
    <property type="match status" value="1"/>
</dbReference>
<dbReference type="PANTHER" id="PTHR10270:SF283">
    <property type="entry name" value="TRANSCRIPTION FACTOR SOX-19A-RELATED"/>
    <property type="match status" value="1"/>
</dbReference>
<dbReference type="Pfam" id="PF00505">
    <property type="entry name" value="HMG_box"/>
    <property type="match status" value="1"/>
</dbReference>
<dbReference type="Pfam" id="PF12336">
    <property type="entry name" value="SOXp"/>
    <property type="match status" value="1"/>
</dbReference>
<dbReference type="SMART" id="SM00398">
    <property type="entry name" value="HMG"/>
    <property type="match status" value="1"/>
</dbReference>
<dbReference type="SUPFAM" id="SSF47095">
    <property type="entry name" value="HMG-box"/>
    <property type="match status" value="1"/>
</dbReference>
<dbReference type="PROSITE" id="PS50118">
    <property type="entry name" value="HMG_BOX_2"/>
    <property type="match status" value="1"/>
</dbReference>
<sequence>MYSMLEHDMKSAVPPTHQSAQGMTQLNGGVTHGSAKPAVNSQQQQSSDPMDKVKRPMNAFMVWSRGQRRKMAQENPKMHNSEISKRLGAEWKLLTDAEKRPFIDEAKRLRALHMKEYPDYKYKPRRKTKPVLKKDNPAAKYPLSAGNLLAAAAAQGSGGSPRMDSYGWGHTGGYPGMQTDALGYSQQLHRYDLSALQYPSAMATAQTYMNGANSYNPMSYSSTPQQPSPVMSMVKPEQVSHSPTGAHSHQRGPLQGDLRDMISMYIPGGDTTDSGAQRGYSNIQQHYLTGTAPLTHI</sequence>
<comment type="function">
    <text evidence="3">Transcriptional activator.</text>
</comment>
<comment type="subcellular location">
    <subcellularLocation>
        <location>Nucleus</location>
    </subcellularLocation>
</comment>
<comment type="developmental stage">
    <text evidence="3 5">Expressed zygotically. First detected at the mid-blastula transition. Confined to the future ectoderm by the shield stage, and to the presumptive neuroectoderm by the 75-80% epiboly stage. From the tail bud to the 3-somite stage, expressed throughout the neural plate, except in the anterior margin; strongest expression in the presumptive ventral diencephalon. At the 12- to 25-somite stage, expressed broadly in the central nervous system. From 24-30 hours post-fertilization, restricted to the ventral diencephalon, midbrain and hindbrain/anterior spinal cord region, and to the retina and lens.</text>
</comment>
<feature type="chain" id="PRO_0000048776" description="Transcription factor Sox-19a">
    <location>
        <begin position="1"/>
        <end position="297"/>
    </location>
</feature>
<feature type="DNA-binding region" description="HMG box" evidence="1">
    <location>
        <begin position="53"/>
        <end position="121"/>
    </location>
</feature>
<feature type="region of interest" description="Disordered" evidence="2">
    <location>
        <begin position="1"/>
        <end position="52"/>
    </location>
</feature>
<feature type="region of interest" description="Disordered" evidence="2">
    <location>
        <begin position="219"/>
        <end position="255"/>
    </location>
</feature>
<feature type="compositionally biased region" description="Basic and acidic residues" evidence="2">
    <location>
        <begin position="1"/>
        <end position="10"/>
    </location>
</feature>
<feature type="compositionally biased region" description="Polar residues" evidence="2">
    <location>
        <begin position="16"/>
        <end position="28"/>
    </location>
</feature>
<feature type="compositionally biased region" description="Polar residues" evidence="2">
    <location>
        <begin position="39"/>
        <end position="48"/>
    </location>
</feature>
<feature type="compositionally biased region" description="Polar residues" evidence="2">
    <location>
        <begin position="219"/>
        <end position="229"/>
    </location>
</feature>
<feature type="modified residue" description="Phosphoserine" evidence="4">
    <location>
        <position position="160"/>
    </location>
</feature>
<feature type="sequence conflict" description="In Ref. 1; CAA56221." evidence="6" ref="1">
    <original>NGGVTHG</original>
    <variation>KRWSDPR</variation>
    <location>
        <begin position="27"/>
        <end position="33"/>
    </location>
</feature>
<feature type="sequence conflict" description="In Ref. 1; CAA56221." evidence="6" ref="1">
    <original>VNS</original>
    <variation>CQQ</variation>
    <location>
        <begin position="39"/>
        <end position="41"/>
    </location>
</feature>
<feature type="sequence conflict" description="In Ref. 1; CAA56221." evidence="6" ref="1">
    <original>S</original>
    <variation>R</variation>
    <location>
        <position position="47"/>
    </location>
</feature>
<feature type="sequence conflict" description="In Ref. 1; CAA56221." evidence="6" ref="1">
    <original>TK</original>
    <variation>Q</variation>
    <location>
        <begin position="128"/>
        <end position="129"/>
    </location>
</feature>
<feature type="sequence conflict" description="In Ref. 1; CAA56221." evidence="6" ref="1">
    <location>
        <position position="154"/>
    </location>
</feature>
<feature type="sequence conflict" description="In Ref. 1; CAA56221." evidence="6" ref="1">
    <original>S</original>
    <variation>C</variation>
    <location>
        <position position="200"/>
    </location>
</feature>
<feature type="sequence conflict" description="In Ref. 1; CAA56221." evidence="6" ref="1">
    <original>YSSTPQQPSPVMSMVKP</original>
    <variation>IAALHSSPAQSVSHGET</variation>
    <location>
        <begin position="220"/>
        <end position="236"/>
    </location>
</feature>
<feature type="sequence conflict" description="In Ref. 1; CAA56221." evidence="6" ref="1">
    <original>PTGAHSHQR</original>
    <variation>SHWSPQPPA</variation>
    <location>
        <begin position="243"/>
        <end position="251"/>
    </location>
</feature>
<feature type="sequence conflict" description="In Ref. 1; CAA56221." evidence="6" ref="1">
    <original>I</original>
    <variation>M</variation>
    <location>
        <position position="266"/>
    </location>
</feature>
<feature type="sequence conflict" description="In Ref. 1; CAA56221." evidence="6" ref="1">
    <original>YSNIQQHYLTGTAPLTHI</original>
    <variation>LLQHSQHSITGRRLLHTSDQKLSLPSVSGLESHRCRVKMREH</variation>
    <location>
        <begin position="280"/>
        <end position="297"/>
    </location>
</feature>